<comment type="function">
    <text evidence="1">Strongly inhibits juvenile hormone biosynthesis in vitro by the corpora allata from fifth-stadium larvae and adult females.</text>
</comment>
<comment type="subcellular location">
    <subcellularLocation>
        <location>Secreted</location>
    </subcellularLocation>
</comment>
<comment type="developmental stage">
    <text evidence="3">Highest level in adult female brain, lower levels in adult male brain. Expressed in the brain of sixth larval stage with decreasing levels in prepupae, young pupae and 10 day old pupae.</text>
</comment>
<comment type="similarity">
    <text evidence="2">Belongs to the allatostatin family.</text>
</comment>
<feature type="signal peptide" evidence="2">
    <location>
        <begin position="1"/>
        <end position="26"/>
    </location>
</feature>
<feature type="propeptide" id="PRO_0000001154" evidence="1 2">
    <location>
        <begin position="27"/>
        <end position="106"/>
    </location>
</feature>
<feature type="peptide" id="PRO_0000001155" description="Allatostatin" evidence="1">
    <location>
        <begin position="109"/>
        <end position="123"/>
    </location>
</feature>
<feature type="modified residue" description="Pyrrolidone carboxylic acid" evidence="1">
    <location>
        <position position="109"/>
    </location>
</feature>
<gene>
    <name evidence="5" type="primary">ast</name>
</gene>
<protein>
    <recommendedName>
        <fullName>Allatostatin</fullName>
        <shortName>AS</shortName>
        <shortName>Spofr-AS</shortName>
    </recommendedName>
</protein>
<sequence length="125" mass="14099">MKTSAYNVYLGVVAAMLALLFVTINAAPMEADDETAENTLVAHPDGDMELSGPWDAINTAALRKLLLQLDAEDRMGGVTRSWPQAEPRGWGLRALDSRLARQWRADKRQVRFRQCYFNPISCFRK</sequence>
<reference evidence="4 5" key="1">
    <citation type="journal article" date="2003" name="Insect Biochem. Mol. Biol.">
        <title>Molecular characterisation of cDNAs from the fall armyworm Spodoptera frugiperda encoding Manduca sexta allatotropin and allatostatin preprohormone peptides.</title>
        <authorList>
            <person name="Abdel-latief M."/>
            <person name="Meyering-Vos M."/>
            <person name="Hoffmann K.H."/>
        </authorList>
    </citation>
    <scope>NUCLEOTIDE SEQUENCE [MRNA]</scope>
    <scope>DEVELOPMENTAL STAGE</scope>
    <source>
        <tissue evidence="3">Brain</tissue>
    </source>
</reference>
<organism>
    <name type="scientific">Spodoptera frugiperda</name>
    <name type="common">Fall armyworm</name>
    <dbReference type="NCBI Taxonomy" id="7108"/>
    <lineage>
        <taxon>Eukaryota</taxon>
        <taxon>Metazoa</taxon>
        <taxon>Ecdysozoa</taxon>
        <taxon>Arthropoda</taxon>
        <taxon>Hexapoda</taxon>
        <taxon>Insecta</taxon>
        <taxon>Pterygota</taxon>
        <taxon>Neoptera</taxon>
        <taxon>Endopterygota</taxon>
        <taxon>Lepidoptera</taxon>
        <taxon>Glossata</taxon>
        <taxon>Ditrysia</taxon>
        <taxon>Noctuoidea</taxon>
        <taxon>Noctuidae</taxon>
        <taxon>Amphipyrinae</taxon>
        <taxon>Spodoptera</taxon>
    </lineage>
</organism>
<accession>Q868F8</accession>
<proteinExistence type="evidence at transcript level"/>
<dbReference type="EMBL" id="AJ488181">
    <property type="protein sequence ID" value="CAD32496.1"/>
    <property type="molecule type" value="mRNA"/>
</dbReference>
<dbReference type="Proteomes" id="UP000829999">
    <property type="component" value="Unplaced"/>
</dbReference>
<dbReference type="GO" id="GO:0005576">
    <property type="term" value="C:extracellular region"/>
    <property type="evidence" value="ECO:0007669"/>
    <property type="project" value="UniProtKB-SubCell"/>
</dbReference>
<dbReference type="GO" id="GO:0005184">
    <property type="term" value="F:neuropeptide hormone activity"/>
    <property type="evidence" value="ECO:0000250"/>
    <property type="project" value="UniProtKB"/>
</dbReference>
<dbReference type="GO" id="GO:0045968">
    <property type="term" value="P:negative regulation of juvenile hormone biosynthetic process"/>
    <property type="evidence" value="ECO:0000250"/>
    <property type="project" value="UniProtKB"/>
</dbReference>
<dbReference type="GO" id="GO:0007218">
    <property type="term" value="P:neuropeptide signaling pathway"/>
    <property type="evidence" value="ECO:0007669"/>
    <property type="project" value="UniProtKB-KW"/>
</dbReference>
<keyword id="KW-0165">Cleavage on pair of basic residues</keyword>
<keyword id="KW-0527">Neuropeptide</keyword>
<keyword id="KW-0873">Pyrrolidone carboxylic acid</keyword>
<keyword id="KW-0964">Secreted</keyword>
<keyword id="KW-0732">Signal</keyword>
<name>ALLS_SPOFR</name>
<evidence type="ECO:0000250" key="1">
    <source>
        <dbReference type="UniProtKB" id="P42559"/>
    </source>
</evidence>
<evidence type="ECO:0000255" key="2"/>
<evidence type="ECO:0000269" key="3">
    <source>
    </source>
</evidence>
<evidence type="ECO:0000305" key="4"/>
<evidence type="ECO:0000312" key="5">
    <source>
        <dbReference type="EMBL" id="CAD32496.1"/>
    </source>
</evidence>